<reference key="1">
    <citation type="journal article" date="1997" name="Microbiology">
        <title>Sequencing and functional annotation of the Bacillus subtilis genes in the 200 kb rrnB-dnaB region.</title>
        <authorList>
            <person name="Lapidus A."/>
            <person name="Galleron N."/>
            <person name="Sorokin A."/>
            <person name="Ehrlich S.D."/>
        </authorList>
    </citation>
    <scope>NUCLEOTIDE SEQUENCE [GENOMIC DNA]</scope>
    <source>
        <strain>168</strain>
    </source>
</reference>
<reference key="2">
    <citation type="journal article" date="1997" name="Nature">
        <title>The complete genome sequence of the Gram-positive bacterium Bacillus subtilis.</title>
        <authorList>
            <person name="Kunst F."/>
            <person name="Ogasawara N."/>
            <person name="Moszer I."/>
            <person name="Albertini A.M."/>
            <person name="Alloni G."/>
            <person name="Azevedo V."/>
            <person name="Bertero M.G."/>
            <person name="Bessieres P."/>
            <person name="Bolotin A."/>
            <person name="Borchert S."/>
            <person name="Borriss R."/>
            <person name="Boursier L."/>
            <person name="Brans A."/>
            <person name="Braun M."/>
            <person name="Brignell S.C."/>
            <person name="Bron S."/>
            <person name="Brouillet S."/>
            <person name="Bruschi C.V."/>
            <person name="Caldwell B."/>
            <person name="Capuano V."/>
            <person name="Carter N.M."/>
            <person name="Choi S.-K."/>
            <person name="Codani J.-J."/>
            <person name="Connerton I.F."/>
            <person name="Cummings N.J."/>
            <person name="Daniel R.A."/>
            <person name="Denizot F."/>
            <person name="Devine K.M."/>
            <person name="Duesterhoeft A."/>
            <person name="Ehrlich S.D."/>
            <person name="Emmerson P.T."/>
            <person name="Entian K.-D."/>
            <person name="Errington J."/>
            <person name="Fabret C."/>
            <person name="Ferrari E."/>
            <person name="Foulger D."/>
            <person name="Fritz C."/>
            <person name="Fujita M."/>
            <person name="Fujita Y."/>
            <person name="Fuma S."/>
            <person name="Galizzi A."/>
            <person name="Galleron N."/>
            <person name="Ghim S.-Y."/>
            <person name="Glaser P."/>
            <person name="Goffeau A."/>
            <person name="Golightly E.J."/>
            <person name="Grandi G."/>
            <person name="Guiseppi G."/>
            <person name="Guy B.J."/>
            <person name="Haga K."/>
            <person name="Haiech J."/>
            <person name="Harwood C.R."/>
            <person name="Henaut A."/>
            <person name="Hilbert H."/>
            <person name="Holsappel S."/>
            <person name="Hosono S."/>
            <person name="Hullo M.-F."/>
            <person name="Itaya M."/>
            <person name="Jones L.-M."/>
            <person name="Joris B."/>
            <person name="Karamata D."/>
            <person name="Kasahara Y."/>
            <person name="Klaerr-Blanchard M."/>
            <person name="Klein C."/>
            <person name="Kobayashi Y."/>
            <person name="Koetter P."/>
            <person name="Koningstein G."/>
            <person name="Krogh S."/>
            <person name="Kumano M."/>
            <person name="Kurita K."/>
            <person name="Lapidus A."/>
            <person name="Lardinois S."/>
            <person name="Lauber J."/>
            <person name="Lazarevic V."/>
            <person name="Lee S.-M."/>
            <person name="Levine A."/>
            <person name="Liu H."/>
            <person name="Masuda S."/>
            <person name="Mauel C."/>
            <person name="Medigue C."/>
            <person name="Medina N."/>
            <person name="Mellado R.P."/>
            <person name="Mizuno M."/>
            <person name="Moestl D."/>
            <person name="Nakai S."/>
            <person name="Noback M."/>
            <person name="Noone D."/>
            <person name="O'Reilly M."/>
            <person name="Ogawa K."/>
            <person name="Ogiwara A."/>
            <person name="Oudega B."/>
            <person name="Park S.-H."/>
            <person name="Parro V."/>
            <person name="Pohl T.M."/>
            <person name="Portetelle D."/>
            <person name="Porwollik S."/>
            <person name="Prescott A.M."/>
            <person name="Presecan E."/>
            <person name="Pujic P."/>
            <person name="Purnelle B."/>
            <person name="Rapoport G."/>
            <person name="Rey M."/>
            <person name="Reynolds S."/>
            <person name="Rieger M."/>
            <person name="Rivolta C."/>
            <person name="Rocha E."/>
            <person name="Roche B."/>
            <person name="Rose M."/>
            <person name="Sadaie Y."/>
            <person name="Sato T."/>
            <person name="Scanlan E."/>
            <person name="Schleich S."/>
            <person name="Schroeter R."/>
            <person name="Scoffone F."/>
            <person name="Sekiguchi J."/>
            <person name="Sekowska A."/>
            <person name="Seror S.J."/>
            <person name="Serror P."/>
            <person name="Shin B.-S."/>
            <person name="Soldo B."/>
            <person name="Sorokin A."/>
            <person name="Tacconi E."/>
            <person name="Takagi T."/>
            <person name="Takahashi H."/>
            <person name="Takemaru K."/>
            <person name="Takeuchi M."/>
            <person name="Tamakoshi A."/>
            <person name="Tanaka T."/>
            <person name="Terpstra P."/>
            <person name="Tognoni A."/>
            <person name="Tosato V."/>
            <person name="Uchiyama S."/>
            <person name="Vandenbol M."/>
            <person name="Vannier F."/>
            <person name="Vassarotti A."/>
            <person name="Viari A."/>
            <person name="Wambutt R."/>
            <person name="Wedler E."/>
            <person name="Wedler H."/>
            <person name="Weitzenegger T."/>
            <person name="Winters P."/>
            <person name="Wipat A."/>
            <person name="Yamamoto H."/>
            <person name="Yamane K."/>
            <person name="Yasumoto K."/>
            <person name="Yata K."/>
            <person name="Yoshida K."/>
            <person name="Yoshikawa H.-F."/>
            <person name="Zumstein E."/>
            <person name="Yoshikawa H."/>
            <person name="Danchin A."/>
        </authorList>
    </citation>
    <scope>NUCLEOTIDE SEQUENCE [LARGE SCALE GENOMIC DNA]</scope>
    <source>
        <strain>168</strain>
    </source>
</reference>
<organism>
    <name type="scientific">Bacillus subtilis (strain 168)</name>
    <dbReference type="NCBI Taxonomy" id="224308"/>
    <lineage>
        <taxon>Bacteria</taxon>
        <taxon>Bacillati</taxon>
        <taxon>Bacillota</taxon>
        <taxon>Bacilli</taxon>
        <taxon>Bacillales</taxon>
        <taxon>Bacillaceae</taxon>
        <taxon>Bacillus</taxon>
    </lineage>
</organism>
<feature type="chain" id="PRO_0000101235" description="DNA polymerase I">
    <location>
        <begin position="1"/>
        <end position="880"/>
    </location>
</feature>
<feature type="domain" description="5'-3' exonuclease" evidence="2">
    <location>
        <begin position="174"/>
        <end position="268"/>
    </location>
</feature>
<feature type="domain" description="3'-5' exonuclease" evidence="2">
    <location>
        <begin position="302"/>
        <end position="470"/>
    </location>
</feature>
<sequence length="880" mass="99092">MTERKKLVLVDGNSLAYRAFFALPLLSNDKGVHTNAVYGFAMILMKMLEDEKPTHMLVAFDAGKTTFRHGTFKEYKGGRQKTPPELSEQMPFIRELLDAYQISRYELEQYEADDIIGTLAKSAEKDGFEVKVFSGDKDLTQLATDKTTVAITRKGITDVEFYTPEHVKEKYGLTPEQIIDMKGLMGDSSDNIPGVPGVGEKTAIKLLKQFDSVEKLLESIDEVSGKKLKEKLEEFKDQALMSKELATIMTDAPIEVSVSGLEYQGFNREQVIAIFKDLGFNTLLERLGEDSAEAEQDQSLEDINVKTVTDVTSDILVSPSAFVVEQIGDNYHEEPILGFSIVNETGAYFIPKDIAVESEVFKEWVENDEQKKWVFDSKRAVVALRWQGIELKGAEFDTLLAAYIINPGNSYDDVASVAKDYGLHIVSSDESVYGKGAKRAVPSEDVLSEHLGRKALAIQSLREKLVQELENNDQLELFEELEMPLALILGEMESTGVKVDVDRLKRMGEELGAKLKEYEEKIHEIAGEPFNINSPKQLGVILFEKIGLPVVKKTKTGYSTSADVLEKLADKHDIVDYILQYRQIGKLQSTYIEGLLKVTRPDSHKVHTRFNQALTQTGRLSSTDPNLQNIPIRLEEGRKIRQAFVPSEKDWLIFAADYSQIELRVLAHISKDENLIEAFTNDMDIHTKTAMDVFHVAKDEVTSAMRRQAKAVNFGIVYGISDYGLSQNLGITRKEAGAFIDRYLESFQGVKAYMEDSVQEAKQKGYVTTLMHRRRYIPELTSRNFNIRSFAERTAMNTPIQGSAADIIKKAMIDMAAKLKEKQLKARLLLQVHDELIFEAPKEEIEILEKLVPEVMEHALALDVPLKVDFASGPSWYDAK</sequence>
<dbReference type="EC" id="2.7.7.7"/>
<dbReference type="EMBL" id="AF008220">
    <property type="protein sequence ID" value="AAC00350.1"/>
    <property type="molecule type" value="Genomic_DNA"/>
</dbReference>
<dbReference type="EMBL" id="AL009126">
    <property type="protein sequence ID" value="CAB14869.1"/>
    <property type="molecule type" value="Genomic_DNA"/>
</dbReference>
<dbReference type="PIR" id="E69680">
    <property type="entry name" value="E69680"/>
</dbReference>
<dbReference type="RefSeq" id="NP_390787.1">
    <property type="nucleotide sequence ID" value="NC_000964.3"/>
</dbReference>
<dbReference type="RefSeq" id="WP_004398870.1">
    <property type="nucleotide sequence ID" value="NZ_OZ025638.1"/>
</dbReference>
<dbReference type="SMR" id="O34996"/>
<dbReference type="FunCoup" id="O34996">
    <property type="interactions" value="340"/>
</dbReference>
<dbReference type="IntAct" id="O34996">
    <property type="interactions" value="8"/>
</dbReference>
<dbReference type="STRING" id="224308.BSU29090"/>
<dbReference type="PaxDb" id="224308-BSU29090"/>
<dbReference type="EnsemblBacteria" id="CAB14869">
    <property type="protein sequence ID" value="CAB14869"/>
    <property type="gene ID" value="BSU_29090"/>
</dbReference>
<dbReference type="GeneID" id="936617"/>
<dbReference type="KEGG" id="bsu:BSU29090"/>
<dbReference type="PATRIC" id="fig|224308.179.peg.3158"/>
<dbReference type="eggNOG" id="COG0258">
    <property type="taxonomic scope" value="Bacteria"/>
</dbReference>
<dbReference type="eggNOG" id="COG0749">
    <property type="taxonomic scope" value="Bacteria"/>
</dbReference>
<dbReference type="InParanoid" id="O34996"/>
<dbReference type="OrthoDB" id="9806424at2"/>
<dbReference type="PhylomeDB" id="O34996"/>
<dbReference type="BioCyc" id="BSUB:BSU29090-MONOMER"/>
<dbReference type="Proteomes" id="UP000001570">
    <property type="component" value="Chromosome"/>
</dbReference>
<dbReference type="GO" id="GO:0008408">
    <property type="term" value="F:3'-5' exonuclease activity"/>
    <property type="evidence" value="ECO:0007669"/>
    <property type="project" value="InterPro"/>
</dbReference>
<dbReference type="GO" id="GO:0008409">
    <property type="term" value="F:5'-3' exonuclease activity"/>
    <property type="evidence" value="ECO:0007669"/>
    <property type="project" value="InterPro"/>
</dbReference>
<dbReference type="GO" id="GO:0003677">
    <property type="term" value="F:DNA binding"/>
    <property type="evidence" value="ECO:0007669"/>
    <property type="project" value="UniProtKB-KW"/>
</dbReference>
<dbReference type="GO" id="GO:0003887">
    <property type="term" value="F:DNA-directed DNA polymerase activity"/>
    <property type="evidence" value="ECO:0000318"/>
    <property type="project" value="GO_Central"/>
</dbReference>
<dbReference type="GO" id="GO:0006261">
    <property type="term" value="P:DNA-templated DNA replication"/>
    <property type="evidence" value="ECO:0007669"/>
    <property type="project" value="InterPro"/>
</dbReference>
<dbReference type="GO" id="GO:0006302">
    <property type="term" value="P:double-strand break repair"/>
    <property type="evidence" value="ECO:0000318"/>
    <property type="project" value="GO_Central"/>
</dbReference>
<dbReference type="CDD" id="cd08637">
    <property type="entry name" value="DNA_pol_A_pol_I_C"/>
    <property type="match status" value="1"/>
</dbReference>
<dbReference type="CDD" id="cd06140">
    <property type="entry name" value="DNA_polA_I_Bacillus_like_exo"/>
    <property type="match status" value="1"/>
</dbReference>
<dbReference type="CDD" id="cd09898">
    <property type="entry name" value="H3TH_53EXO"/>
    <property type="match status" value="1"/>
</dbReference>
<dbReference type="CDD" id="cd09859">
    <property type="entry name" value="PIN_53EXO"/>
    <property type="match status" value="1"/>
</dbReference>
<dbReference type="FunFam" id="1.10.150.20:FF:000002">
    <property type="entry name" value="DNA polymerase I"/>
    <property type="match status" value="1"/>
</dbReference>
<dbReference type="FunFam" id="1.10.150.20:FF:000003">
    <property type="entry name" value="DNA polymerase I"/>
    <property type="match status" value="1"/>
</dbReference>
<dbReference type="FunFam" id="1.20.1060.10:FF:000001">
    <property type="entry name" value="DNA polymerase I"/>
    <property type="match status" value="1"/>
</dbReference>
<dbReference type="FunFam" id="3.40.50.1010:FF:000001">
    <property type="entry name" value="DNA polymerase I"/>
    <property type="match status" value="1"/>
</dbReference>
<dbReference type="Gene3D" id="3.30.70.370">
    <property type="match status" value="1"/>
</dbReference>
<dbReference type="Gene3D" id="1.10.150.20">
    <property type="entry name" value="5' to 3' exonuclease, C-terminal subdomain"/>
    <property type="match status" value="2"/>
</dbReference>
<dbReference type="Gene3D" id="3.40.50.1010">
    <property type="entry name" value="5'-nuclease"/>
    <property type="match status" value="1"/>
</dbReference>
<dbReference type="Gene3D" id="3.30.420.10">
    <property type="entry name" value="Ribonuclease H-like superfamily/Ribonuclease H"/>
    <property type="match status" value="1"/>
</dbReference>
<dbReference type="Gene3D" id="1.20.1060.10">
    <property type="entry name" value="Taq DNA Polymerase, Chain T, domain 4"/>
    <property type="match status" value="1"/>
</dbReference>
<dbReference type="InterPro" id="IPR002562">
    <property type="entry name" value="3'-5'_exonuclease_dom"/>
</dbReference>
<dbReference type="InterPro" id="IPR020046">
    <property type="entry name" value="5-3_exonucl_a-hlix_arch_N"/>
</dbReference>
<dbReference type="InterPro" id="IPR002421">
    <property type="entry name" value="5-3_exonuclease"/>
</dbReference>
<dbReference type="InterPro" id="IPR036279">
    <property type="entry name" value="5-3_exonuclease_C_sf"/>
</dbReference>
<dbReference type="InterPro" id="IPR019760">
    <property type="entry name" value="DNA-dir_DNA_pol_A_CS"/>
</dbReference>
<dbReference type="InterPro" id="IPR001098">
    <property type="entry name" value="DNA-dir_DNA_pol_A_palm_dom"/>
</dbReference>
<dbReference type="InterPro" id="IPR043502">
    <property type="entry name" value="DNA/RNA_pol_sf"/>
</dbReference>
<dbReference type="InterPro" id="IPR054690">
    <property type="entry name" value="DNA_polI_exonuclease"/>
</dbReference>
<dbReference type="InterPro" id="IPR020045">
    <property type="entry name" value="DNA_polI_H3TH"/>
</dbReference>
<dbReference type="InterPro" id="IPR018320">
    <property type="entry name" value="DNA_polymerase_1"/>
</dbReference>
<dbReference type="InterPro" id="IPR002298">
    <property type="entry name" value="DNA_polymerase_A"/>
</dbReference>
<dbReference type="InterPro" id="IPR008918">
    <property type="entry name" value="HhH2"/>
</dbReference>
<dbReference type="InterPro" id="IPR029060">
    <property type="entry name" value="PIN-like_dom_sf"/>
</dbReference>
<dbReference type="InterPro" id="IPR012337">
    <property type="entry name" value="RNaseH-like_sf"/>
</dbReference>
<dbReference type="InterPro" id="IPR036397">
    <property type="entry name" value="RNaseH_sf"/>
</dbReference>
<dbReference type="NCBIfam" id="TIGR00593">
    <property type="entry name" value="pola"/>
    <property type="match status" value="1"/>
</dbReference>
<dbReference type="NCBIfam" id="NF004397">
    <property type="entry name" value="PRK05755.1"/>
    <property type="match status" value="1"/>
</dbReference>
<dbReference type="PANTHER" id="PTHR10133">
    <property type="entry name" value="DNA POLYMERASE I"/>
    <property type="match status" value="1"/>
</dbReference>
<dbReference type="PANTHER" id="PTHR10133:SF27">
    <property type="entry name" value="DNA POLYMERASE NU"/>
    <property type="match status" value="1"/>
</dbReference>
<dbReference type="Pfam" id="PF01367">
    <property type="entry name" value="5_3_exonuc"/>
    <property type="match status" value="1"/>
</dbReference>
<dbReference type="Pfam" id="PF02739">
    <property type="entry name" value="5_3_exonuc_N"/>
    <property type="match status" value="1"/>
</dbReference>
<dbReference type="Pfam" id="PF00476">
    <property type="entry name" value="DNA_pol_A"/>
    <property type="match status" value="1"/>
</dbReference>
<dbReference type="Pfam" id="PF22619">
    <property type="entry name" value="DNA_polI_exo1"/>
    <property type="match status" value="1"/>
</dbReference>
<dbReference type="PRINTS" id="PR00868">
    <property type="entry name" value="DNAPOLI"/>
</dbReference>
<dbReference type="SMART" id="SM00474">
    <property type="entry name" value="35EXOc"/>
    <property type="match status" value="1"/>
</dbReference>
<dbReference type="SMART" id="SM00475">
    <property type="entry name" value="53EXOc"/>
    <property type="match status" value="1"/>
</dbReference>
<dbReference type="SMART" id="SM00279">
    <property type="entry name" value="HhH2"/>
    <property type="match status" value="1"/>
</dbReference>
<dbReference type="SMART" id="SM00482">
    <property type="entry name" value="POLAc"/>
    <property type="match status" value="1"/>
</dbReference>
<dbReference type="SUPFAM" id="SSF47807">
    <property type="entry name" value="5' to 3' exonuclease, C-terminal subdomain"/>
    <property type="match status" value="1"/>
</dbReference>
<dbReference type="SUPFAM" id="SSF56672">
    <property type="entry name" value="DNA/RNA polymerases"/>
    <property type="match status" value="1"/>
</dbReference>
<dbReference type="SUPFAM" id="SSF88723">
    <property type="entry name" value="PIN domain-like"/>
    <property type="match status" value="1"/>
</dbReference>
<dbReference type="SUPFAM" id="SSF53098">
    <property type="entry name" value="Ribonuclease H-like"/>
    <property type="match status" value="1"/>
</dbReference>
<dbReference type="PROSITE" id="PS00447">
    <property type="entry name" value="DNA_POLYMERASE_A"/>
    <property type="match status" value="1"/>
</dbReference>
<comment type="function">
    <text evidence="1">In addition to polymerase activity, this DNA polymerase exhibits 3'-5' and 5'-3' exonuclease activity.</text>
</comment>
<comment type="catalytic activity">
    <reaction>
        <text>DNA(n) + a 2'-deoxyribonucleoside 5'-triphosphate = DNA(n+1) + diphosphate</text>
        <dbReference type="Rhea" id="RHEA:22508"/>
        <dbReference type="Rhea" id="RHEA-COMP:17339"/>
        <dbReference type="Rhea" id="RHEA-COMP:17340"/>
        <dbReference type="ChEBI" id="CHEBI:33019"/>
        <dbReference type="ChEBI" id="CHEBI:61560"/>
        <dbReference type="ChEBI" id="CHEBI:173112"/>
        <dbReference type="EC" id="2.7.7.7"/>
    </reaction>
</comment>
<comment type="subunit">
    <text>Single-chain monomer with multiple functions.</text>
</comment>
<comment type="similarity">
    <text evidence="3">Belongs to the DNA polymerase type-A family.</text>
</comment>
<protein>
    <recommendedName>
        <fullName>DNA polymerase I</fullName>
        <shortName>POL I</shortName>
        <ecNumber>2.7.7.7</ecNumber>
    </recommendedName>
</protein>
<accession>O34996</accession>
<keyword id="KW-0227">DNA damage</keyword>
<keyword id="KW-0234">DNA repair</keyword>
<keyword id="KW-0235">DNA replication</keyword>
<keyword id="KW-0238">DNA-binding</keyword>
<keyword id="KW-0239">DNA-directed DNA polymerase</keyword>
<keyword id="KW-0269">Exonuclease</keyword>
<keyword id="KW-0378">Hydrolase</keyword>
<keyword id="KW-0540">Nuclease</keyword>
<keyword id="KW-0548">Nucleotidyltransferase</keyword>
<keyword id="KW-1185">Reference proteome</keyword>
<keyword id="KW-0808">Transferase</keyword>
<name>DPO1_BACSU</name>
<evidence type="ECO:0000250" key="1"/>
<evidence type="ECO:0000255" key="2"/>
<evidence type="ECO:0000305" key="3"/>
<proteinExistence type="inferred from homology"/>
<gene>
    <name type="primary">polA</name>
    <name type="ordered locus">BSU29090</name>
</gene>